<feature type="chain" id="PRO_0000235932" description="tRNA:m(4)X modification enzyme TRM13">
    <location>
        <begin position="1"/>
        <end position="476"/>
    </location>
</feature>
<feature type="zinc finger region" description="CHHC U11-48K-type" evidence="1">
    <location>
        <begin position="72"/>
        <end position="99"/>
    </location>
</feature>
<feature type="region of interest" description="Disordered" evidence="2">
    <location>
        <begin position="55"/>
        <end position="78"/>
    </location>
</feature>
<feature type="compositionally biased region" description="Basic and acidic residues" evidence="2">
    <location>
        <begin position="62"/>
        <end position="73"/>
    </location>
</feature>
<feature type="binding site" evidence="1">
    <location>
        <position position="75"/>
    </location>
    <ligand>
        <name>Zn(2+)</name>
        <dbReference type="ChEBI" id="CHEBI:29105"/>
    </ligand>
</feature>
<feature type="binding site" evidence="1">
    <location>
        <position position="81"/>
    </location>
    <ligand>
        <name>Zn(2+)</name>
        <dbReference type="ChEBI" id="CHEBI:29105"/>
    </ligand>
</feature>
<feature type="binding site" evidence="1">
    <location>
        <position position="91"/>
    </location>
    <ligand>
        <name>Zn(2+)</name>
        <dbReference type="ChEBI" id="CHEBI:29105"/>
    </ligand>
</feature>
<feature type="binding site" evidence="1">
    <location>
        <position position="95"/>
    </location>
    <ligand>
        <name>Zn(2+)</name>
        <dbReference type="ChEBI" id="CHEBI:29105"/>
    </ligand>
</feature>
<comment type="function">
    <text evidence="5">tRNA methylase which 2'-O-methylates cytidine(4) in tRNA(Pro) and tRNA(Gly)(GCC), and adenosine(4) in tRNA(His).</text>
</comment>
<comment type="catalytic activity">
    <reaction evidence="5">
        <text>cytidine(4) in tRNA(Pro) + S-adenosyl-L-methionine = 2'-O-methylcytidine(4) in tRNA(Pro) + S-adenosyl-L-homocysteine + H(+)</text>
        <dbReference type="Rhea" id="RHEA:32767"/>
        <dbReference type="Rhea" id="RHEA-COMP:10397"/>
        <dbReference type="Rhea" id="RHEA-COMP:10398"/>
        <dbReference type="ChEBI" id="CHEBI:15378"/>
        <dbReference type="ChEBI" id="CHEBI:57856"/>
        <dbReference type="ChEBI" id="CHEBI:59789"/>
        <dbReference type="ChEBI" id="CHEBI:74495"/>
        <dbReference type="ChEBI" id="CHEBI:82748"/>
        <dbReference type="EC" id="2.1.1.225"/>
    </reaction>
</comment>
<comment type="catalytic activity">
    <reaction evidence="5">
        <text>cytidine(4) in tRNA(Gly)(GCC) + S-adenosyl-L-methionine = 2'-O-methylcytidine(4) in tRNA(Gly)(GCC) + S-adenosyl-L-homocysteine + H(+)</text>
        <dbReference type="Rhea" id="RHEA:43192"/>
        <dbReference type="Rhea" id="RHEA-COMP:10399"/>
        <dbReference type="Rhea" id="RHEA-COMP:10400"/>
        <dbReference type="ChEBI" id="CHEBI:15378"/>
        <dbReference type="ChEBI" id="CHEBI:57856"/>
        <dbReference type="ChEBI" id="CHEBI:59789"/>
        <dbReference type="ChEBI" id="CHEBI:74495"/>
        <dbReference type="ChEBI" id="CHEBI:82748"/>
        <dbReference type="EC" id="2.1.1.225"/>
    </reaction>
</comment>
<comment type="catalytic activity">
    <reaction evidence="5">
        <text>adenosine(4) in tRNA(His) + S-adenosyl-L-methionine = 2'-O-methyladenosine(4) in tRNA(His) + S-adenosyl-L-homocysteine + H(+)</text>
        <dbReference type="Rhea" id="RHEA:43196"/>
        <dbReference type="Rhea" id="RHEA-COMP:10401"/>
        <dbReference type="Rhea" id="RHEA-COMP:10402"/>
        <dbReference type="ChEBI" id="CHEBI:15378"/>
        <dbReference type="ChEBI" id="CHEBI:57856"/>
        <dbReference type="ChEBI" id="CHEBI:59789"/>
        <dbReference type="ChEBI" id="CHEBI:74411"/>
        <dbReference type="ChEBI" id="CHEBI:74477"/>
        <dbReference type="EC" id="2.1.1.225"/>
    </reaction>
</comment>
<comment type="subcellular location">
    <subcellularLocation>
        <location evidence="3">Cytoplasm</location>
    </subcellularLocation>
    <subcellularLocation>
        <location evidence="3">Nucleus</location>
    </subcellularLocation>
</comment>
<comment type="disruption phenotype">
    <text evidence="6">Increases cellular ROS (reactive oxygen species) levels (PubMed:32053677). Sensitive to oxidate stress induced by rotenone (PubMed:32053677). Mildly slows cell population growth (PubMed:32053677).</text>
</comment>
<comment type="miscellaneous">
    <text evidence="4">Present with 1230 molecules/cell in log phase SD medium.</text>
</comment>
<comment type="similarity">
    <text evidence="7">Belongs to the methyltransferase TRM13 family.</text>
</comment>
<accession>Q12383</accession>
<accession>D6W1U3</accession>
<dbReference type="EC" id="2.1.1.225"/>
<dbReference type="EMBL" id="U41293">
    <property type="protein sequence ID" value="AAC49467.1"/>
    <property type="molecule type" value="Genomic_DNA"/>
</dbReference>
<dbReference type="EMBL" id="Z74867">
    <property type="protein sequence ID" value="CAA99144.1"/>
    <property type="molecule type" value="Genomic_DNA"/>
</dbReference>
<dbReference type="EMBL" id="BK006948">
    <property type="protein sequence ID" value="DAA10659.1"/>
    <property type="molecule type" value="Genomic_DNA"/>
</dbReference>
<dbReference type="PIR" id="S63445">
    <property type="entry name" value="S63445"/>
</dbReference>
<dbReference type="RefSeq" id="NP_014516.1">
    <property type="nucleotide sequence ID" value="NM_001183379.2"/>
</dbReference>
<dbReference type="BioGRID" id="34250">
    <property type="interactions" value="33"/>
</dbReference>
<dbReference type="FunCoup" id="Q12383">
    <property type="interactions" value="566"/>
</dbReference>
<dbReference type="IntAct" id="Q12383">
    <property type="interactions" value="4"/>
</dbReference>
<dbReference type="MINT" id="Q12383"/>
<dbReference type="STRING" id="4932.YOL125W"/>
<dbReference type="iPTMnet" id="Q12383"/>
<dbReference type="PaxDb" id="4932-YOL125W"/>
<dbReference type="PeptideAtlas" id="Q12383"/>
<dbReference type="EnsemblFungi" id="YOL125W_mRNA">
    <property type="protein sequence ID" value="YOL125W"/>
    <property type="gene ID" value="YOL125W"/>
</dbReference>
<dbReference type="GeneID" id="853995"/>
<dbReference type="KEGG" id="sce:YOL125W"/>
<dbReference type="AGR" id="SGD:S000005485"/>
<dbReference type="SGD" id="S000005485">
    <property type="gene designation" value="TRM13"/>
</dbReference>
<dbReference type="VEuPathDB" id="FungiDB:YOL125W"/>
<dbReference type="eggNOG" id="KOG2811">
    <property type="taxonomic scope" value="Eukaryota"/>
</dbReference>
<dbReference type="GeneTree" id="ENSGT00390000003182"/>
<dbReference type="HOGENOM" id="CLU_027610_1_0_1"/>
<dbReference type="InParanoid" id="Q12383"/>
<dbReference type="OMA" id="HRCSWRS"/>
<dbReference type="OrthoDB" id="258806at2759"/>
<dbReference type="BioCyc" id="MetaCyc:G3O-33521-MONOMER"/>
<dbReference type="BioCyc" id="YEAST:G3O-33521-MONOMER"/>
<dbReference type="BRENDA" id="2.1.1.225">
    <property type="organism ID" value="984"/>
</dbReference>
<dbReference type="BioGRID-ORCS" id="853995">
    <property type="hits" value="1 hit in 10 CRISPR screens"/>
</dbReference>
<dbReference type="PRO" id="PR:Q12383"/>
<dbReference type="Proteomes" id="UP000002311">
    <property type="component" value="Chromosome XV"/>
</dbReference>
<dbReference type="RNAct" id="Q12383">
    <property type="molecule type" value="protein"/>
</dbReference>
<dbReference type="GO" id="GO:0005737">
    <property type="term" value="C:cytoplasm"/>
    <property type="evidence" value="ECO:0007005"/>
    <property type="project" value="SGD"/>
</dbReference>
<dbReference type="GO" id="GO:0005634">
    <property type="term" value="C:nucleus"/>
    <property type="evidence" value="ECO:0007005"/>
    <property type="project" value="SGD"/>
</dbReference>
<dbReference type="GO" id="GO:0106050">
    <property type="term" value="F:tRNA 2'-O-methyltransferase activity"/>
    <property type="evidence" value="ECO:0000314"/>
    <property type="project" value="SGD"/>
</dbReference>
<dbReference type="GO" id="GO:0008175">
    <property type="term" value="F:tRNA methyltransferase activity"/>
    <property type="evidence" value="ECO:0000318"/>
    <property type="project" value="GO_Central"/>
</dbReference>
<dbReference type="GO" id="GO:0008270">
    <property type="term" value="F:zinc ion binding"/>
    <property type="evidence" value="ECO:0007669"/>
    <property type="project" value="UniProtKB-KW"/>
</dbReference>
<dbReference type="GO" id="GO:0030488">
    <property type="term" value="P:tRNA methylation"/>
    <property type="evidence" value="ECO:0000314"/>
    <property type="project" value="SGD"/>
</dbReference>
<dbReference type="GO" id="GO:0002128">
    <property type="term" value="P:tRNA nucleoside ribose methylation"/>
    <property type="evidence" value="ECO:0000315"/>
    <property type="project" value="SGD"/>
</dbReference>
<dbReference type="InterPro" id="IPR007871">
    <property type="entry name" value="Methyltransferase_TRM13"/>
</dbReference>
<dbReference type="InterPro" id="IPR039044">
    <property type="entry name" value="Trm13"/>
</dbReference>
<dbReference type="InterPro" id="IPR022776">
    <property type="entry name" value="TRM13/UPF0224_CHHC_Znf_dom"/>
</dbReference>
<dbReference type="InterPro" id="IPR021721">
    <property type="entry name" value="Znf_CCCH-type_TRM13"/>
</dbReference>
<dbReference type="PANTHER" id="PTHR12998">
    <property type="entry name" value="TRNA:M(4)X MODIFICATION ENZYME TRM13 HOMOLOG"/>
    <property type="match status" value="1"/>
</dbReference>
<dbReference type="PANTHER" id="PTHR12998:SF0">
    <property type="entry name" value="TRNA:M(4)X MODIFICATION ENZYME TRM13 HOMOLOG"/>
    <property type="match status" value="1"/>
</dbReference>
<dbReference type="Pfam" id="PF05206">
    <property type="entry name" value="TRM13"/>
    <property type="match status" value="1"/>
</dbReference>
<dbReference type="Pfam" id="PF11722">
    <property type="entry name" value="zf-TRM13_CCCH"/>
    <property type="match status" value="1"/>
</dbReference>
<dbReference type="Pfam" id="PF05253">
    <property type="entry name" value="zf-U11-48K"/>
    <property type="match status" value="1"/>
</dbReference>
<dbReference type="PROSITE" id="PS51800">
    <property type="entry name" value="ZF_CHHC_U11_48K"/>
    <property type="match status" value="1"/>
</dbReference>
<organism>
    <name type="scientific">Saccharomyces cerevisiae (strain ATCC 204508 / S288c)</name>
    <name type="common">Baker's yeast</name>
    <dbReference type="NCBI Taxonomy" id="559292"/>
    <lineage>
        <taxon>Eukaryota</taxon>
        <taxon>Fungi</taxon>
        <taxon>Dikarya</taxon>
        <taxon>Ascomycota</taxon>
        <taxon>Saccharomycotina</taxon>
        <taxon>Saccharomycetes</taxon>
        <taxon>Saccharomycetales</taxon>
        <taxon>Saccharomycetaceae</taxon>
        <taxon>Saccharomyces</taxon>
    </lineage>
</organism>
<sequence>MLQDNNGPAVKRAKPSERLQCEYFMEKKKRRCGMTRSSQNLYCSEHLNLMKKAANSQVHNKNGSEAEKERERVPCPLDPNHTVWADQLKKHLKKCNKTKLSHLNDDKPYYEPGYNGENGLLSSSVKIDITAEHLVQSIELLYKVFEGESMDELPLRQLNNKLMSLKRFPQLPSNTKHAVQQSSLIENLVDAGAFERPESLNFIEFGCGRAEFSRYVSLYLLTQLTSLPAEHSGSNSNEFVLIDRATNRMKFDKKIKDDFSEIKSNSPSKPISCPSIKRIKIDIRDLKMDPILKSTPGDDIQYVCISKHLCGVATDLTLRCIGNSSILHGDDNNGCNPKLKAICIAMCCRHVCDYGDYVNRSYVTSLVEKYRAHGSILTYETFFRVLTKLCSWGTCGRKPGTAITDIVNVVESFEGAEPYTITIKERENIGLMARRVIDEGRLVYVKEKFTEFNAELIRYVESDVSLENVAMLVYKK</sequence>
<proteinExistence type="evidence at protein level"/>
<gene>
    <name type="primary">TRM13</name>
    <name type="ordered locus">YOL125W</name>
</gene>
<protein>
    <recommendedName>
        <fullName>tRNA:m(4)X modification enzyme TRM13</fullName>
        <ecNumber>2.1.1.225</ecNumber>
    </recommendedName>
    <alternativeName>
        <fullName>tRNA methylase 13</fullName>
    </alternativeName>
</protein>
<evidence type="ECO:0000255" key="1">
    <source>
        <dbReference type="PROSITE-ProRule" id="PRU01141"/>
    </source>
</evidence>
<evidence type="ECO:0000256" key="2">
    <source>
        <dbReference type="SAM" id="MobiDB-lite"/>
    </source>
</evidence>
<evidence type="ECO:0000269" key="3">
    <source>
    </source>
</evidence>
<evidence type="ECO:0000269" key="4">
    <source>
    </source>
</evidence>
<evidence type="ECO:0000269" key="5">
    <source>
    </source>
</evidence>
<evidence type="ECO:0000269" key="6">
    <source>
    </source>
</evidence>
<evidence type="ECO:0000305" key="7"/>
<keyword id="KW-0963">Cytoplasm</keyword>
<keyword id="KW-0479">Metal-binding</keyword>
<keyword id="KW-0489">Methyltransferase</keyword>
<keyword id="KW-0539">Nucleus</keyword>
<keyword id="KW-1185">Reference proteome</keyword>
<keyword id="KW-0949">S-adenosyl-L-methionine</keyword>
<keyword id="KW-0808">Transferase</keyword>
<keyword id="KW-0819">tRNA processing</keyword>
<keyword id="KW-0862">Zinc</keyword>
<keyword id="KW-0863">Zinc-finger</keyword>
<name>TRM13_YEAST</name>
<reference key="1">
    <citation type="journal article" date="1996" name="Yeast">
        <title>Sequence analysis of a 13.4 kbp fragment from the left arm of chromosome XV reveals a malate dehydrogenase gene, a putative Ser/Thr protein kinase, the ribosomal L25 gene and four new open reading frames.</title>
        <authorList>
            <person name="Casamayor A."/>
            <person name="Khalid H."/>
            <person name="Balcells L."/>
            <person name="Aldea M."/>
            <person name="Casas C."/>
            <person name="Herrero E."/>
            <person name="Arino J."/>
        </authorList>
    </citation>
    <scope>NUCLEOTIDE SEQUENCE [GENOMIC DNA]</scope>
    <source>
        <strain>ATCC 96604 / S288c / FY1679</strain>
    </source>
</reference>
<reference key="2">
    <citation type="journal article" date="1997" name="Nature">
        <title>The nucleotide sequence of Saccharomyces cerevisiae chromosome XV.</title>
        <authorList>
            <person name="Dujon B."/>
            <person name="Albermann K."/>
            <person name="Aldea M."/>
            <person name="Alexandraki D."/>
            <person name="Ansorge W."/>
            <person name="Arino J."/>
            <person name="Benes V."/>
            <person name="Bohn C."/>
            <person name="Bolotin-Fukuhara M."/>
            <person name="Bordonne R."/>
            <person name="Boyer J."/>
            <person name="Camasses A."/>
            <person name="Casamayor A."/>
            <person name="Casas C."/>
            <person name="Cheret G."/>
            <person name="Cziepluch C."/>
            <person name="Daignan-Fornier B."/>
            <person name="Dang V.-D."/>
            <person name="de Haan M."/>
            <person name="Delius H."/>
            <person name="Durand P."/>
            <person name="Fairhead C."/>
            <person name="Feldmann H."/>
            <person name="Gaillon L."/>
            <person name="Galisson F."/>
            <person name="Gamo F.-J."/>
            <person name="Gancedo C."/>
            <person name="Goffeau A."/>
            <person name="Goulding S.E."/>
            <person name="Grivell L.A."/>
            <person name="Habbig B."/>
            <person name="Hand N.J."/>
            <person name="Hani J."/>
            <person name="Hattenhorst U."/>
            <person name="Hebling U."/>
            <person name="Hernando Y."/>
            <person name="Herrero E."/>
            <person name="Heumann K."/>
            <person name="Hiesel R."/>
            <person name="Hilger F."/>
            <person name="Hofmann B."/>
            <person name="Hollenberg C.P."/>
            <person name="Hughes B."/>
            <person name="Jauniaux J.-C."/>
            <person name="Kalogeropoulos A."/>
            <person name="Katsoulou C."/>
            <person name="Kordes E."/>
            <person name="Lafuente M.J."/>
            <person name="Landt O."/>
            <person name="Louis E.J."/>
            <person name="Maarse A.C."/>
            <person name="Madania A."/>
            <person name="Mannhaupt G."/>
            <person name="Marck C."/>
            <person name="Martin R.P."/>
            <person name="Mewes H.-W."/>
            <person name="Michaux G."/>
            <person name="Paces V."/>
            <person name="Parle-McDermott A.G."/>
            <person name="Pearson B.M."/>
            <person name="Perrin A."/>
            <person name="Pettersson B."/>
            <person name="Poch O."/>
            <person name="Pohl T.M."/>
            <person name="Poirey R."/>
            <person name="Portetelle D."/>
            <person name="Pujol A."/>
            <person name="Purnelle B."/>
            <person name="Ramezani Rad M."/>
            <person name="Rechmann S."/>
            <person name="Schwager C."/>
            <person name="Schweizer M."/>
            <person name="Sor F."/>
            <person name="Sterky F."/>
            <person name="Tarassov I.A."/>
            <person name="Teodoru C."/>
            <person name="Tettelin H."/>
            <person name="Thierry A."/>
            <person name="Tobiasch E."/>
            <person name="Tzermia M."/>
            <person name="Uhlen M."/>
            <person name="Unseld M."/>
            <person name="Valens M."/>
            <person name="Vandenbol M."/>
            <person name="Vetter I."/>
            <person name="Vlcek C."/>
            <person name="Voet M."/>
            <person name="Volckaert G."/>
            <person name="Voss H."/>
            <person name="Wambutt R."/>
            <person name="Wedler H."/>
            <person name="Wiemann S."/>
            <person name="Winsor B."/>
            <person name="Wolfe K.H."/>
            <person name="Zollner A."/>
            <person name="Zumstein E."/>
            <person name="Kleine K."/>
        </authorList>
    </citation>
    <scope>NUCLEOTIDE SEQUENCE [LARGE SCALE GENOMIC DNA]</scope>
    <source>
        <strain>ATCC 204508 / S288c</strain>
    </source>
</reference>
<reference key="3">
    <citation type="journal article" date="2014" name="G3 (Bethesda)">
        <title>The reference genome sequence of Saccharomyces cerevisiae: Then and now.</title>
        <authorList>
            <person name="Engel S.R."/>
            <person name="Dietrich F.S."/>
            <person name="Fisk D.G."/>
            <person name="Binkley G."/>
            <person name="Balakrishnan R."/>
            <person name="Costanzo M.C."/>
            <person name="Dwight S.S."/>
            <person name="Hitz B.C."/>
            <person name="Karra K."/>
            <person name="Nash R.S."/>
            <person name="Weng S."/>
            <person name="Wong E.D."/>
            <person name="Lloyd P."/>
            <person name="Skrzypek M.S."/>
            <person name="Miyasato S.R."/>
            <person name="Simison M."/>
            <person name="Cherry J.M."/>
        </authorList>
    </citation>
    <scope>GENOME REANNOTATION</scope>
    <source>
        <strain>ATCC 204508 / S288c</strain>
    </source>
</reference>
<reference key="4">
    <citation type="journal article" date="2003" name="Nature">
        <title>Global analysis of protein localization in budding yeast.</title>
        <authorList>
            <person name="Huh W.-K."/>
            <person name="Falvo J.V."/>
            <person name="Gerke L.C."/>
            <person name="Carroll A.S."/>
            <person name="Howson R.W."/>
            <person name="Weissman J.S."/>
            <person name="O'Shea E.K."/>
        </authorList>
    </citation>
    <scope>SUBCELLULAR LOCATION [LARGE SCALE ANALYSIS]</scope>
</reference>
<reference key="5">
    <citation type="journal article" date="2003" name="Nature">
        <title>Global analysis of protein expression in yeast.</title>
        <authorList>
            <person name="Ghaemmaghami S."/>
            <person name="Huh W.-K."/>
            <person name="Bower K."/>
            <person name="Howson R.W."/>
            <person name="Belle A."/>
            <person name="Dephoure N."/>
            <person name="O'Shea E.K."/>
            <person name="Weissman J.S."/>
        </authorList>
    </citation>
    <scope>LEVEL OF PROTEIN EXPRESSION [LARGE SCALE ANALYSIS]</scope>
</reference>
<reference key="6">
    <citation type="journal article" date="2007" name="RNA">
        <title>The 2'-O-methyltransferase responsible for modification of yeast tRNA at position 4.</title>
        <authorList>
            <person name="Wilkinson M.L."/>
            <person name="Crary S.M."/>
            <person name="Jackman J.E."/>
            <person name="Grayhack E.J."/>
            <person name="Phizicky E.M."/>
        </authorList>
    </citation>
    <scope>FUNCTION</scope>
    <scope>CATALYTIC ACTIVITY</scope>
</reference>
<reference key="7">
    <citation type="journal article" date="2012" name="Proc. Natl. Acad. Sci. U.S.A.">
        <title>N-terminal acetylome analyses and functional insights of the N-terminal acetyltransferase NatB.</title>
        <authorList>
            <person name="Van Damme P."/>
            <person name="Lasa M."/>
            <person name="Polevoda B."/>
            <person name="Gazquez C."/>
            <person name="Elosegui-Artola A."/>
            <person name="Kim D.S."/>
            <person name="De Juan-Pardo E."/>
            <person name="Demeyer K."/>
            <person name="Hole K."/>
            <person name="Larrea E."/>
            <person name="Timmerman E."/>
            <person name="Prieto J."/>
            <person name="Arnesen T."/>
            <person name="Sherman F."/>
            <person name="Gevaert K."/>
            <person name="Aldabe R."/>
        </authorList>
    </citation>
    <scope>IDENTIFICATION BY MASS SPECTROMETRY [LARGE SCALE ANALYSIS]</scope>
</reference>
<reference key="8">
    <citation type="journal article" date="2020" name="PLoS ONE">
        <title>2'-O-ribose methylation of transfer RNA promotes recovery from oxidative stress in Saccharomyces cerevisiae.</title>
        <authorList>
            <person name="Endres L."/>
            <person name="Rose R.E."/>
            <person name="Doyle F."/>
            <person name="Rahn T."/>
            <person name="Lee B."/>
            <person name="Seaman J."/>
            <person name="McIntyre W.D."/>
            <person name="Fabris D."/>
        </authorList>
    </citation>
    <scope>DISRUPTION PHENOTYPE</scope>
</reference>